<dbReference type="EC" id="4.2.3.131" evidence="3 4"/>
<dbReference type="EMBL" id="KU180504">
    <property type="protein sequence ID" value="APJ36376.1"/>
    <property type="molecule type" value="mRNA"/>
</dbReference>
<dbReference type="EMBL" id="KX831652">
    <property type="protein sequence ID" value="ARO38142.1"/>
    <property type="molecule type" value="mRNA"/>
</dbReference>
<dbReference type="SMR" id="A0A1W6QDI7"/>
<dbReference type="BRENDA" id="4.2.3.131">
    <property type="organism ID" value="15342"/>
</dbReference>
<dbReference type="UniPathway" id="UPA00213"/>
<dbReference type="GO" id="GO:0009507">
    <property type="term" value="C:chloroplast"/>
    <property type="evidence" value="ECO:0007669"/>
    <property type="project" value="UniProtKB-SubCell"/>
</dbReference>
<dbReference type="GO" id="GO:0000287">
    <property type="term" value="F:magnesium ion binding"/>
    <property type="evidence" value="ECO:0007669"/>
    <property type="project" value="InterPro"/>
</dbReference>
<dbReference type="GO" id="GO:0062205">
    <property type="term" value="F:miltiradiene synthase activity"/>
    <property type="evidence" value="ECO:0000314"/>
    <property type="project" value="UniProtKB"/>
</dbReference>
<dbReference type="GO" id="GO:0010333">
    <property type="term" value="F:terpene synthase activity"/>
    <property type="evidence" value="ECO:0007669"/>
    <property type="project" value="InterPro"/>
</dbReference>
<dbReference type="GO" id="GO:0009686">
    <property type="term" value="P:gibberellin biosynthetic process"/>
    <property type="evidence" value="ECO:0007669"/>
    <property type="project" value="TreeGrafter"/>
</dbReference>
<dbReference type="GO" id="GO:1901946">
    <property type="term" value="P:miltiradiene biosynthetic process"/>
    <property type="evidence" value="ECO:0000314"/>
    <property type="project" value="UniProtKB"/>
</dbReference>
<dbReference type="GO" id="GO:0016114">
    <property type="term" value="P:terpenoid biosynthetic process"/>
    <property type="evidence" value="ECO:0000314"/>
    <property type="project" value="UniProtKB"/>
</dbReference>
<dbReference type="FunFam" id="1.10.600.10:FF:000005">
    <property type="entry name" value="Ent-kaur-16-ene synthase, chloroplastic"/>
    <property type="match status" value="1"/>
</dbReference>
<dbReference type="Gene3D" id="1.10.600.10">
    <property type="entry name" value="Farnesyl Diphosphate Synthase"/>
    <property type="match status" value="1"/>
</dbReference>
<dbReference type="Gene3D" id="1.50.10.130">
    <property type="entry name" value="Terpene synthase, N-terminal domain"/>
    <property type="match status" value="1"/>
</dbReference>
<dbReference type="InterPro" id="IPR008949">
    <property type="entry name" value="Isoprenoid_synthase_dom_sf"/>
</dbReference>
<dbReference type="InterPro" id="IPR001906">
    <property type="entry name" value="Terpene_synth_N"/>
</dbReference>
<dbReference type="InterPro" id="IPR036965">
    <property type="entry name" value="Terpene_synth_N_sf"/>
</dbReference>
<dbReference type="InterPro" id="IPR050148">
    <property type="entry name" value="Terpene_synthase-like"/>
</dbReference>
<dbReference type="InterPro" id="IPR005630">
    <property type="entry name" value="Terpene_synthase_metal-bd"/>
</dbReference>
<dbReference type="InterPro" id="IPR008930">
    <property type="entry name" value="Terpenoid_cyclase/PrenylTrfase"/>
</dbReference>
<dbReference type="PANTHER" id="PTHR31739:SF33">
    <property type="entry name" value="CIS-ABIENOL SYNTHASE, CHLOROPLASTIC"/>
    <property type="match status" value="1"/>
</dbReference>
<dbReference type="PANTHER" id="PTHR31739">
    <property type="entry name" value="ENT-COPALYL DIPHOSPHATE SYNTHASE, CHLOROPLASTIC"/>
    <property type="match status" value="1"/>
</dbReference>
<dbReference type="Pfam" id="PF01397">
    <property type="entry name" value="Terpene_synth"/>
    <property type="match status" value="1"/>
</dbReference>
<dbReference type="Pfam" id="PF03936">
    <property type="entry name" value="Terpene_synth_C"/>
    <property type="match status" value="1"/>
</dbReference>
<dbReference type="SUPFAM" id="SSF48239">
    <property type="entry name" value="Terpenoid cyclases/Protein prenyltransferases"/>
    <property type="match status" value="1"/>
</dbReference>
<dbReference type="SUPFAM" id="SSF48576">
    <property type="entry name" value="Terpenoid synthases"/>
    <property type="match status" value="1"/>
</dbReference>
<name>KSL1_ISORU</name>
<reference key="1">
    <citation type="journal article" date="2017" name="Plant Physiol.">
        <title>Functional diversification of kaurene synthase-like genes in Isodon rubescens.</title>
        <authorList>
            <person name="Jin B."/>
            <person name="Cui G."/>
            <person name="Guo J."/>
            <person name="Tang J."/>
            <person name="Duan L."/>
            <person name="Lin H."/>
            <person name="Shen Y."/>
            <person name="Chen T."/>
            <person name="Zhang H."/>
            <person name="Huang L."/>
        </authorList>
    </citation>
    <scope>NUCLEOTIDE SEQUENCE [MRNA] (ISOFORM 2)</scope>
    <scope>FUNCTION</scope>
    <scope>PATHWAY</scope>
    <scope>CATALYTIC ACTIVITY</scope>
    <scope>TISSUE SPECIFICITY</scope>
</reference>
<reference key="2">
    <citation type="journal article" date="2017" name="PLoS ONE">
        <title>Biosynthesis of the oxygenated diterpene nezukol in the medicinal plant Isodon rubescens is catalyzed by a pair of diterpene synthases.</title>
        <authorList>
            <person name="Pelot K.A."/>
            <person name="Hagelthorn L.M."/>
            <person name="Addison J.B."/>
            <person name="Zerbe P."/>
        </authorList>
    </citation>
    <scope>NUCLEOTIDE SEQUENCE [MRNA] (ISOFORM 1)</scope>
    <scope>FUNCTION</scope>
    <scope>PATHWAY</scope>
    <scope>CATALYTIC ACTIVITY</scope>
    <scope>TISSUE SPECIFICITY</scope>
</reference>
<proteinExistence type="evidence at protein level"/>
<protein>
    <recommendedName>
        <fullName evidence="6">Miltiradiene synthase KSL1, chloroplastic</fullName>
        <ecNumber evidence="3 4">4.2.3.131</ecNumber>
    </recommendedName>
    <alternativeName>
        <fullName evidence="5">Kaurene synthase 1</fullName>
        <shortName evidence="5">IrKSL1</shortName>
    </alternativeName>
    <alternativeName>
        <fullName evidence="6">Terpene synthase 4</fullName>
        <shortName evidence="6">IrTPS4</shortName>
    </alternativeName>
</protein>
<feature type="transit peptide" description="Chloroplast" evidence="2">
    <location>
        <begin position="1"/>
        <end position="51"/>
    </location>
</feature>
<feature type="chain" id="PRO_0000452385" description="Miltiradiene synthase KSL1, chloroplastic">
    <location>
        <begin position="52"/>
        <end position="626"/>
    </location>
</feature>
<feature type="short sequence motif" description="DDXXD motif" evidence="7">
    <location>
        <begin position="329"/>
        <end position="333"/>
    </location>
</feature>
<feature type="binding site" evidence="1">
    <location>
        <position position="329"/>
    </location>
    <ligand>
        <name>Mg(2+)</name>
        <dbReference type="ChEBI" id="CHEBI:18420"/>
        <label>1</label>
    </ligand>
</feature>
<feature type="binding site" evidence="1">
    <location>
        <position position="329"/>
    </location>
    <ligand>
        <name>Mg(2+)</name>
        <dbReference type="ChEBI" id="CHEBI:18420"/>
        <label>2</label>
    </ligand>
</feature>
<feature type="binding site" evidence="1">
    <location>
        <position position="333"/>
    </location>
    <ligand>
        <name>Mg(2+)</name>
        <dbReference type="ChEBI" id="CHEBI:18420"/>
        <label>1</label>
    </ligand>
</feature>
<feature type="binding site" evidence="1">
    <location>
        <position position="333"/>
    </location>
    <ligand>
        <name>Mg(2+)</name>
        <dbReference type="ChEBI" id="CHEBI:18420"/>
        <label>2</label>
    </ligand>
</feature>
<feature type="binding site" evidence="1">
    <location>
        <position position="473"/>
    </location>
    <ligand>
        <name>Mg(2+)</name>
        <dbReference type="ChEBI" id="CHEBI:18420"/>
        <label>3</label>
    </ligand>
</feature>
<feature type="binding site" evidence="1">
    <location>
        <position position="481"/>
    </location>
    <ligand>
        <name>Mg(2+)</name>
        <dbReference type="ChEBI" id="CHEBI:18420"/>
        <label>3</label>
    </ligand>
</feature>
<feature type="splice variant" id="VSP_060991" description="In isoform 2.">
    <original>TELCQQ</original>
    <variation>QSCVSN</variation>
    <location>
        <begin position="592"/>
        <end position="597"/>
    </location>
</feature>
<feature type="splice variant" id="VSP_060992" description="In isoform 2.">
    <location>
        <begin position="598"/>
        <end position="626"/>
    </location>
</feature>
<feature type="sequence conflict" description="In Ref. 1; APJ36376." evidence="7" ref="1">
    <original>H</original>
    <variation>R</variation>
    <location>
        <position position="151"/>
    </location>
</feature>
<feature type="sequence conflict" description="In Ref. 1; APJ36376." evidence="7" ref="1">
    <original>L</original>
    <variation>M</variation>
    <location>
        <position position="515"/>
    </location>
</feature>
<keyword id="KW-0025">Alternative splicing</keyword>
<keyword id="KW-0150">Chloroplast</keyword>
<keyword id="KW-0456">Lyase</keyword>
<keyword id="KW-0460">Magnesium</keyword>
<keyword id="KW-0479">Metal-binding</keyword>
<keyword id="KW-0934">Plastid</keyword>
<keyword id="KW-0809">Transit peptide</keyword>
<comment type="function">
    <text evidence="3 4">Involved in the biosynthesis of ent-kaurene diterpenoids natural products such as oridonin, miltiradiene, eriocalyxin B and nezukol, known to exhibit antitumor, anti-inflammatory and antibacterial activities (PubMed:28381502, PubMed:28445526). Catalyzes the conversion of (+)-copalyl diphosphate ((+)-CPP) to miltiradiene (PubMed:28381502, PubMed:28445526).</text>
</comment>
<comment type="catalytic activity">
    <reaction evidence="3 4">
        <text>(+)-copalyl diphosphate = miltiradiene + diphosphate</text>
        <dbReference type="Rhea" id="RHEA:33983"/>
        <dbReference type="ChEBI" id="CHEBI:33019"/>
        <dbReference type="ChEBI" id="CHEBI:58635"/>
        <dbReference type="ChEBI" id="CHEBI:65037"/>
        <dbReference type="EC" id="4.2.3.131"/>
    </reaction>
    <physiologicalReaction direction="left-to-right" evidence="3 4">
        <dbReference type="Rhea" id="RHEA:33984"/>
    </physiologicalReaction>
</comment>
<comment type="cofactor">
    <cofactor evidence="1">
        <name>Mg(2+)</name>
        <dbReference type="ChEBI" id="CHEBI:18420"/>
    </cofactor>
    <text evidence="1">Binds 3 Mg(2+) ions per subunit.</text>
</comment>
<comment type="pathway">
    <text evidence="3 4">Secondary metabolite biosynthesis; terpenoid biosynthesis.</text>
</comment>
<comment type="subcellular location">
    <subcellularLocation>
        <location evidence="2">Plastid</location>
        <location evidence="2">Chloroplast</location>
    </subcellularLocation>
</comment>
<comment type="alternative products">
    <event type="alternative splicing"/>
    <isoform>
        <id>A0A1W6QDI7-1</id>
        <name>1</name>
        <sequence type="displayed"/>
    </isoform>
    <isoform>
        <id>A0A1W6QDI7-2</id>
        <name>2</name>
        <sequence type="described" ref="VSP_060991 VSP_060992"/>
    </isoform>
</comment>
<comment type="tissue specificity">
    <text evidence="3 4">Highly expressed in roots, and, at low levels, in stems and leaves.</text>
</comment>
<comment type="domain">
    <text evidence="7">The Asp-Asp-Xaa-Xaa-Asp/Glu (DDXXD/E) motif is important for the catalytic activity, presumably through binding to Mg(2+).</text>
</comment>
<comment type="miscellaneous">
    <text evidence="3">Abietane diterpenoids (e.g. miltiradiene, abietatriene and ferruginol) accumulate specifically in the periderm of roots (PubMed:28381502). The ent-kaurene diterpenoid oridonin, main constituent of Isodon rubescens, accumulates in leaves (PubMed:28381502).</text>
</comment>
<comment type="similarity">
    <text evidence="7">Belongs to the terpene synthase family.</text>
</comment>
<organism>
    <name type="scientific">Isodon rubescens</name>
    <name type="common">Rabdosia rubescens</name>
    <dbReference type="NCBI Taxonomy" id="587669"/>
    <lineage>
        <taxon>Eukaryota</taxon>
        <taxon>Viridiplantae</taxon>
        <taxon>Streptophyta</taxon>
        <taxon>Embryophyta</taxon>
        <taxon>Tracheophyta</taxon>
        <taxon>Spermatophyta</taxon>
        <taxon>Magnoliopsida</taxon>
        <taxon>eudicotyledons</taxon>
        <taxon>Gunneridae</taxon>
        <taxon>Pentapetalae</taxon>
        <taxon>asterids</taxon>
        <taxon>lamiids</taxon>
        <taxon>Lamiales</taxon>
        <taxon>Lamiaceae</taxon>
        <taxon>Nepetoideae</taxon>
        <taxon>Ocimeae</taxon>
        <taxon>Isodoninae</taxon>
        <taxon>Isodon</taxon>
    </lineage>
</organism>
<sequence length="626" mass="72049">MSLAFNLRVIPFSGHTIQSRRGLFPVHESPMITTKPFAAVKCSLTTSTDLMGKIKEKFNGKVHTSLPAITTHSADTPSNLCIIDTLQRLGVDRYFQSEIDSILDDTYRLWQLKKEDIFSDITTHAMAFRLLRVKGYQVSSEELAPYADQEHVNLQEIDVPTVIELYRAAQERVTEEDSTLKKLYVWTSTFLKQQLLTDAIPDKKLHEQVDYYLKNYHGILDRMGVRRSLDLYDVGHYKTLKAADGFSNLCNEDFLAFARQDFNISQAQHQKELQQLQRWYSDCRLDTLKFGRDVVRVSNFLTSAMSGDPELSDVRLAFAKHIVLVTRIDDFFDHGGSKEESYKILELVKEWKEKPAGEYGSEEVEILFTAVYNTVNELAEMAHIEQGRSVKDLLIKLWVEILSMFKIELDTWSDDTALTLDEYLSSSWVSIGCRICILISMQFLGVKLTDEMLLSEECTDLCRHVSMVDRLLNDVQTFEKERKENTGNSVSLLLAAHKDERAINEEEAITKAKDLAEYNRRKLMQIVYKTGTIFPRKCKDMFLKVCRIGCYLYSSGDEFTTPQQMMEDMKSLVYEPLTIHPPEANNVVGKKTELCQQLVKPYVCHTFCKKYTVSRPSNVMMTCYID</sequence>
<gene>
    <name evidence="5" type="primary">KSL1</name>
    <name evidence="6" type="synonym">TPS4</name>
</gene>
<evidence type="ECO:0000250" key="1">
    <source>
        <dbReference type="UniProtKB" id="Q40577"/>
    </source>
</evidence>
<evidence type="ECO:0000255" key="2"/>
<evidence type="ECO:0000269" key="3">
    <source>
    </source>
</evidence>
<evidence type="ECO:0000269" key="4">
    <source>
    </source>
</evidence>
<evidence type="ECO:0000303" key="5">
    <source>
    </source>
</evidence>
<evidence type="ECO:0000303" key="6">
    <source>
    </source>
</evidence>
<evidence type="ECO:0000305" key="7"/>
<accession>A0A1W6QDI7</accession>
<accession>A0A1X9ISN1</accession>